<keyword id="KW-0614">Plasmid</keyword>
<proteinExistence type="inferred from homology"/>
<protein>
    <recommendedName>
        <fullName>UPF0401 protein YubL</fullName>
    </recommendedName>
</protein>
<accession>Q5J3W6</accession>
<sequence length="79" mass="9459">MRMSEYFRILQGLPDGSFTREQAEAVAAQYRNVFIEDDQGTHFRLVVRQDGTLIWRSWNFEDCAGYWMNQYIRDFGILK</sequence>
<evidence type="ECO:0000305" key="1"/>
<dbReference type="EMBL" id="AY509004">
    <property type="protein sequence ID" value="AAS76399.1"/>
    <property type="status" value="ALT_INIT"/>
    <property type="molecule type" value="Genomic_DNA"/>
</dbReference>
<dbReference type="SMR" id="Q5J3W6"/>
<dbReference type="KEGG" id="sec:SCH_119"/>
<dbReference type="HOGENOM" id="CLU_182912_1_0_6"/>
<dbReference type="Proteomes" id="UP000000538">
    <property type="component" value="Plasmid pSC138"/>
</dbReference>
<dbReference type="Gene3D" id="3.30.160.130">
    <property type="entry name" value="ykff protein like domains"/>
    <property type="match status" value="1"/>
</dbReference>
<dbReference type="InterPro" id="IPR009253">
    <property type="entry name" value="DUF905"/>
</dbReference>
<dbReference type="InterPro" id="IPR038612">
    <property type="entry name" value="YkfF-like_sf"/>
</dbReference>
<dbReference type="Pfam" id="PF06006">
    <property type="entry name" value="DUF905"/>
    <property type="match status" value="1"/>
</dbReference>
<dbReference type="SUPFAM" id="SSF54786">
    <property type="entry name" value="YcfA/nrd intein domain"/>
    <property type="match status" value="1"/>
</dbReference>
<feature type="chain" id="PRO_0000268751" description="UPF0401 protein YubL">
    <location>
        <begin position="1"/>
        <end position="79"/>
    </location>
</feature>
<name>YUBL_SALCH</name>
<organism>
    <name type="scientific">Salmonella choleraesuis (strain SC-B67)</name>
    <dbReference type="NCBI Taxonomy" id="321314"/>
    <lineage>
        <taxon>Bacteria</taxon>
        <taxon>Pseudomonadati</taxon>
        <taxon>Pseudomonadota</taxon>
        <taxon>Gammaproteobacteria</taxon>
        <taxon>Enterobacterales</taxon>
        <taxon>Enterobacteriaceae</taxon>
        <taxon>Salmonella</taxon>
    </lineage>
</organism>
<gene>
    <name type="primary">yubL</name>
    <name type="ordered locus">SCH_119</name>
</gene>
<reference key="1">
    <citation type="journal article" date="2005" name="Nucleic Acids Res.">
        <title>The genome sequence of Salmonella enterica serovar Choleraesuis, a highly invasive and resistant zoonotic pathogen.</title>
        <authorList>
            <person name="Chiu C.-H."/>
            <person name="Tang P."/>
            <person name="Chu C."/>
            <person name="Hu S."/>
            <person name="Bao Q."/>
            <person name="Yu J."/>
            <person name="Chou Y.-Y."/>
            <person name="Wang H.-S."/>
            <person name="Lee Y.-S."/>
        </authorList>
    </citation>
    <scope>NUCLEOTIDE SEQUENCE [LARGE SCALE GENOMIC DNA]</scope>
    <source>
        <strain>SC-B67</strain>
    </source>
</reference>
<comment type="similarity">
    <text evidence="1">Belongs to the UPF0401 family.</text>
</comment>
<comment type="sequence caution" evidence="1">
    <conflict type="erroneous initiation">
        <sequence resource="EMBL-CDS" id="AAS76399"/>
    </conflict>
</comment>
<geneLocation type="plasmid">
    <name>pSC138</name>
</geneLocation>